<name>WF10B_HUMAN</name>
<proteinExistence type="evidence at protein level"/>
<gene>
    <name type="primary">WFDC10B</name>
    <name type="synonym">WAP12</name>
</gene>
<feature type="signal peptide" evidence="1">
    <location>
        <begin position="1"/>
        <end position="21"/>
    </location>
</feature>
<feature type="chain" id="PRO_0000041388" description="Protein WFDC10B">
    <location>
        <begin position="22"/>
        <end position="73"/>
    </location>
</feature>
<feature type="domain" description="WAP" evidence="2">
    <location>
        <begin position="28"/>
        <end position="73"/>
    </location>
</feature>
<feature type="splice variant" id="VSP_007552" description="In isoform 2." evidence="4">
    <original>MAPQTLLLVLVLCVLLLQAQGGYRDKMRMQR</original>
    <variation>MVSCERRASKSVGQILLWDFGYTCRLSHRRRNSTEILSRNLPALYTG</variation>
    <location>
        <begin position="1"/>
        <end position="31"/>
    </location>
</feature>
<feature type="sequence variant" id="VAR_052952" description="In dbSNP:rs232729." evidence="3">
    <original>L</original>
    <variation>P</variation>
    <location>
        <position position="8"/>
    </location>
</feature>
<accession>Q8IUB3</accession>
<accession>A6PVD7</accession>
<accession>Q0VAG0</accession>
<accession>Q0VAG1</accession>
<accession>Q5TGZ5</accession>
<accession>Q8IUB4</accession>
<reference key="1">
    <citation type="journal article" date="2002" name="Biochem. J.">
        <title>A locus on human chromosome 20 contains several genes expressing protease inhibitor domains with homology to whey acidic protein.</title>
        <authorList>
            <person name="Clauss A."/>
            <person name="Lilja H."/>
            <person name="Lundwall A."/>
        </authorList>
    </citation>
    <scope>NUCLEOTIDE SEQUENCE [MRNA] (ISOFORMS 1 AND 2)</scope>
</reference>
<reference key="2">
    <citation type="journal article" date="2001" name="Nature">
        <title>The DNA sequence and comparative analysis of human chromosome 20.</title>
        <authorList>
            <person name="Deloukas P."/>
            <person name="Matthews L.H."/>
            <person name="Ashurst J.L."/>
            <person name="Burton J."/>
            <person name="Gilbert J.G.R."/>
            <person name="Jones M."/>
            <person name="Stavrides G."/>
            <person name="Almeida J.P."/>
            <person name="Babbage A.K."/>
            <person name="Bagguley C.L."/>
            <person name="Bailey J."/>
            <person name="Barlow K.F."/>
            <person name="Bates K.N."/>
            <person name="Beard L.M."/>
            <person name="Beare D.M."/>
            <person name="Beasley O.P."/>
            <person name="Bird C.P."/>
            <person name="Blakey S.E."/>
            <person name="Bridgeman A.M."/>
            <person name="Brown A.J."/>
            <person name="Buck D."/>
            <person name="Burrill W.D."/>
            <person name="Butler A.P."/>
            <person name="Carder C."/>
            <person name="Carter N.P."/>
            <person name="Chapman J.C."/>
            <person name="Clamp M."/>
            <person name="Clark G."/>
            <person name="Clark L.N."/>
            <person name="Clark S.Y."/>
            <person name="Clee C.M."/>
            <person name="Clegg S."/>
            <person name="Cobley V.E."/>
            <person name="Collier R.E."/>
            <person name="Connor R.E."/>
            <person name="Corby N.R."/>
            <person name="Coulson A."/>
            <person name="Coville G.J."/>
            <person name="Deadman R."/>
            <person name="Dhami P.D."/>
            <person name="Dunn M."/>
            <person name="Ellington A.G."/>
            <person name="Frankland J.A."/>
            <person name="Fraser A."/>
            <person name="French L."/>
            <person name="Garner P."/>
            <person name="Grafham D.V."/>
            <person name="Griffiths C."/>
            <person name="Griffiths M.N.D."/>
            <person name="Gwilliam R."/>
            <person name="Hall R.E."/>
            <person name="Hammond S."/>
            <person name="Harley J.L."/>
            <person name="Heath P.D."/>
            <person name="Ho S."/>
            <person name="Holden J.L."/>
            <person name="Howden P.J."/>
            <person name="Huckle E."/>
            <person name="Hunt A.R."/>
            <person name="Hunt S.E."/>
            <person name="Jekosch K."/>
            <person name="Johnson C.M."/>
            <person name="Johnson D."/>
            <person name="Kay M.P."/>
            <person name="Kimberley A.M."/>
            <person name="King A."/>
            <person name="Knights A."/>
            <person name="Laird G.K."/>
            <person name="Lawlor S."/>
            <person name="Lehvaeslaiho M.H."/>
            <person name="Leversha M.A."/>
            <person name="Lloyd C."/>
            <person name="Lloyd D.M."/>
            <person name="Lovell J.D."/>
            <person name="Marsh V.L."/>
            <person name="Martin S.L."/>
            <person name="McConnachie L.J."/>
            <person name="McLay K."/>
            <person name="McMurray A.A."/>
            <person name="Milne S.A."/>
            <person name="Mistry D."/>
            <person name="Moore M.J.F."/>
            <person name="Mullikin J.C."/>
            <person name="Nickerson T."/>
            <person name="Oliver K."/>
            <person name="Parker A."/>
            <person name="Patel R."/>
            <person name="Pearce T.A.V."/>
            <person name="Peck A.I."/>
            <person name="Phillimore B.J.C.T."/>
            <person name="Prathalingam S.R."/>
            <person name="Plumb R.W."/>
            <person name="Ramsay H."/>
            <person name="Rice C.M."/>
            <person name="Ross M.T."/>
            <person name="Scott C.E."/>
            <person name="Sehra H.K."/>
            <person name="Shownkeen R."/>
            <person name="Sims S."/>
            <person name="Skuce C.D."/>
            <person name="Smith M.L."/>
            <person name="Soderlund C."/>
            <person name="Steward C.A."/>
            <person name="Sulston J.E."/>
            <person name="Swann R.M."/>
            <person name="Sycamore N."/>
            <person name="Taylor R."/>
            <person name="Tee L."/>
            <person name="Thomas D.W."/>
            <person name="Thorpe A."/>
            <person name="Tracey A."/>
            <person name="Tromans A.C."/>
            <person name="Vaudin M."/>
            <person name="Wall M."/>
            <person name="Wallis J.M."/>
            <person name="Whitehead S.L."/>
            <person name="Whittaker P."/>
            <person name="Willey D.L."/>
            <person name="Williams L."/>
            <person name="Williams S.A."/>
            <person name="Wilming L."/>
            <person name="Wray P.W."/>
            <person name="Hubbard T."/>
            <person name="Durbin R.M."/>
            <person name="Bentley D.R."/>
            <person name="Beck S."/>
            <person name="Rogers J."/>
        </authorList>
    </citation>
    <scope>NUCLEOTIDE SEQUENCE [LARGE SCALE GENOMIC DNA]</scope>
</reference>
<reference key="3">
    <citation type="submission" date="2005-09" db="EMBL/GenBank/DDBJ databases">
        <authorList>
            <person name="Mural R.J."/>
            <person name="Istrail S."/>
            <person name="Sutton G.G."/>
            <person name="Florea L."/>
            <person name="Halpern A.L."/>
            <person name="Mobarry C.M."/>
            <person name="Lippert R."/>
            <person name="Walenz B."/>
            <person name="Shatkay H."/>
            <person name="Dew I."/>
            <person name="Miller J.R."/>
            <person name="Flanigan M.J."/>
            <person name="Edwards N.J."/>
            <person name="Bolanos R."/>
            <person name="Fasulo D."/>
            <person name="Halldorsson B.V."/>
            <person name="Hannenhalli S."/>
            <person name="Turner R."/>
            <person name="Yooseph S."/>
            <person name="Lu F."/>
            <person name="Nusskern D.R."/>
            <person name="Shue B.C."/>
            <person name="Zheng X.H."/>
            <person name="Zhong F."/>
            <person name="Delcher A.L."/>
            <person name="Huson D.H."/>
            <person name="Kravitz S.A."/>
            <person name="Mouchard L."/>
            <person name="Reinert K."/>
            <person name="Remington K.A."/>
            <person name="Clark A.G."/>
            <person name="Waterman M.S."/>
            <person name="Eichler E.E."/>
            <person name="Adams M.D."/>
            <person name="Hunkapiller M.W."/>
            <person name="Myers E.W."/>
            <person name="Venter J.C."/>
        </authorList>
    </citation>
    <scope>NUCLEOTIDE SEQUENCE [LARGE SCALE GENOMIC DNA]</scope>
</reference>
<reference key="4">
    <citation type="journal article" date="2004" name="Genome Res.">
        <title>The status, quality, and expansion of the NIH full-length cDNA project: the Mammalian Gene Collection (MGC).</title>
        <authorList>
            <consortium name="The MGC Project Team"/>
        </authorList>
    </citation>
    <scope>NUCLEOTIDE SEQUENCE [LARGE SCALE MRNA] (ISOFORM 1)</scope>
    <scope>VARIANT PRO-8</scope>
</reference>
<evidence type="ECO:0000255" key="1"/>
<evidence type="ECO:0000255" key="2">
    <source>
        <dbReference type="PROSITE-ProRule" id="PRU00722"/>
    </source>
</evidence>
<evidence type="ECO:0000269" key="3">
    <source>
    </source>
</evidence>
<evidence type="ECO:0000303" key="4">
    <source>
    </source>
</evidence>
<evidence type="ECO:0000305" key="5"/>
<protein>
    <recommendedName>
        <fullName>Protein WFDC10B</fullName>
    </recommendedName>
</protein>
<organism>
    <name type="scientific">Homo sapiens</name>
    <name type="common">Human</name>
    <dbReference type="NCBI Taxonomy" id="9606"/>
    <lineage>
        <taxon>Eukaryota</taxon>
        <taxon>Metazoa</taxon>
        <taxon>Chordata</taxon>
        <taxon>Craniata</taxon>
        <taxon>Vertebrata</taxon>
        <taxon>Euteleostomi</taxon>
        <taxon>Mammalia</taxon>
        <taxon>Eutheria</taxon>
        <taxon>Euarchontoglires</taxon>
        <taxon>Primates</taxon>
        <taxon>Haplorrhini</taxon>
        <taxon>Catarrhini</taxon>
        <taxon>Hominidae</taxon>
        <taxon>Homo</taxon>
    </lineage>
</organism>
<dbReference type="EMBL" id="AF454506">
    <property type="protein sequence ID" value="AAN70989.1"/>
    <property type="molecule type" value="mRNA"/>
</dbReference>
<dbReference type="EMBL" id="AF454507">
    <property type="protein sequence ID" value="AAN70990.1"/>
    <property type="molecule type" value="mRNA"/>
</dbReference>
<dbReference type="EMBL" id="AL031671">
    <property type="status" value="NOT_ANNOTATED_CDS"/>
    <property type="molecule type" value="Genomic_DNA"/>
</dbReference>
<dbReference type="EMBL" id="AL109656">
    <property type="status" value="NOT_ANNOTATED_CDS"/>
    <property type="molecule type" value="Genomic_DNA"/>
</dbReference>
<dbReference type="EMBL" id="CH471077">
    <property type="protein sequence ID" value="EAW75823.1"/>
    <property type="molecule type" value="Genomic_DNA"/>
</dbReference>
<dbReference type="EMBL" id="BC121071">
    <property type="protein sequence ID" value="AAI21072.1"/>
    <property type="molecule type" value="mRNA"/>
</dbReference>
<dbReference type="EMBL" id="BC121072">
    <property type="protein sequence ID" value="AAI21073.1"/>
    <property type="molecule type" value="mRNA"/>
</dbReference>
<dbReference type="CCDS" id="CCDS13365.1">
    <molecule id="Q8IUB3-2"/>
</dbReference>
<dbReference type="CCDS" id="CCDS13366.1">
    <molecule id="Q8IUB3-1"/>
</dbReference>
<dbReference type="RefSeq" id="NP_742003.1">
    <molecule id="Q8IUB3-1"/>
    <property type="nucleotide sequence ID" value="NM_172006.2"/>
</dbReference>
<dbReference type="RefSeq" id="NP_742143.1">
    <molecule id="Q8IUB3-2"/>
    <property type="nucleotide sequence ID" value="NM_172131.2"/>
</dbReference>
<dbReference type="RefSeq" id="XP_016883313.1">
    <property type="nucleotide sequence ID" value="XM_017027824.1"/>
</dbReference>
<dbReference type="RefSeq" id="XP_016883314.1">
    <property type="nucleotide sequence ID" value="XM_017027825.1"/>
</dbReference>
<dbReference type="SMR" id="Q8IUB3"/>
<dbReference type="BioGRID" id="129382">
    <property type="interactions" value="2"/>
</dbReference>
<dbReference type="IntAct" id="Q8IUB3">
    <property type="interactions" value="1"/>
</dbReference>
<dbReference type="STRING" id="9606.ENSP00000337466"/>
<dbReference type="iPTMnet" id="Q8IUB3"/>
<dbReference type="BioMuta" id="WFDC10B"/>
<dbReference type="DMDM" id="32130300"/>
<dbReference type="PaxDb" id="9606-ENSP00000337466"/>
<dbReference type="PeptideAtlas" id="Q8IUB3"/>
<dbReference type="Antibodypedia" id="52050">
    <property type="antibodies" value="2 antibodies from 1 providers"/>
</dbReference>
<dbReference type="DNASU" id="280664"/>
<dbReference type="Ensembl" id="ENST00000330523.10">
    <molecule id="Q8IUB3-1"/>
    <property type="protein sequence ID" value="ENSP00000327628.5"/>
    <property type="gene ID" value="ENSG00000182931.10"/>
</dbReference>
<dbReference type="Ensembl" id="ENST00000335769.2">
    <molecule id="Q8IUB3-2"/>
    <property type="protein sequence ID" value="ENSP00000337466.2"/>
    <property type="gene ID" value="ENSG00000182931.10"/>
</dbReference>
<dbReference type="GeneID" id="280664"/>
<dbReference type="KEGG" id="hsa:280664"/>
<dbReference type="MANE-Select" id="ENST00000330523.10">
    <property type="protein sequence ID" value="ENSP00000327628.5"/>
    <property type="RefSeq nucleotide sequence ID" value="NM_172006.2"/>
    <property type="RefSeq protein sequence ID" value="NP_742003.1"/>
</dbReference>
<dbReference type="UCSC" id="uc002xpb.4">
    <molecule id="Q8IUB3-1"/>
    <property type="organism name" value="human"/>
</dbReference>
<dbReference type="AGR" id="HGNC:20479"/>
<dbReference type="CTD" id="280664"/>
<dbReference type="GeneCards" id="WFDC10B"/>
<dbReference type="HGNC" id="HGNC:20479">
    <property type="gene designation" value="WFDC10B"/>
</dbReference>
<dbReference type="HPA" id="ENSG00000182931">
    <property type="expression patterns" value="Tissue enhanced (epididymis, retina)"/>
</dbReference>
<dbReference type="neXtProt" id="NX_Q8IUB3"/>
<dbReference type="OpenTargets" id="ENSG00000182931"/>
<dbReference type="PharmGKB" id="PA134935020"/>
<dbReference type="VEuPathDB" id="HostDB:ENSG00000182931"/>
<dbReference type="eggNOG" id="ENOG502T9GV">
    <property type="taxonomic scope" value="Eukaryota"/>
</dbReference>
<dbReference type="GeneTree" id="ENSGT00940000163972"/>
<dbReference type="HOGENOM" id="CLU_175686_0_0_1"/>
<dbReference type="InParanoid" id="Q8IUB3"/>
<dbReference type="OMA" id="KICKKQP"/>
<dbReference type="OrthoDB" id="9528106at2759"/>
<dbReference type="PAN-GO" id="Q8IUB3">
    <property type="GO annotations" value="4 GO annotations based on evolutionary models"/>
</dbReference>
<dbReference type="PhylomeDB" id="Q8IUB3"/>
<dbReference type="PathwayCommons" id="Q8IUB3"/>
<dbReference type="SignaLink" id="Q8IUB3"/>
<dbReference type="BioGRID-ORCS" id="280664">
    <property type="hits" value="12 hits in 1102 CRISPR screens"/>
</dbReference>
<dbReference type="GenomeRNAi" id="280664"/>
<dbReference type="Pharos" id="Q8IUB3">
    <property type="development level" value="Tdark"/>
</dbReference>
<dbReference type="PRO" id="PR:Q8IUB3"/>
<dbReference type="Proteomes" id="UP000005640">
    <property type="component" value="Chromosome 20"/>
</dbReference>
<dbReference type="RNAct" id="Q8IUB3">
    <property type="molecule type" value="protein"/>
</dbReference>
<dbReference type="Bgee" id="ENSG00000182931">
    <property type="expression patterns" value="Expressed in male germ line stem cell (sensu Vertebrata) in testis and 93 other cell types or tissues"/>
</dbReference>
<dbReference type="GO" id="GO:0005615">
    <property type="term" value="C:extracellular space"/>
    <property type="evidence" value="ECO:0000318"/>
    <property type="project" value="GO_Central"/>
</dbReference>
<dbReference type="GO" id="GO:0004867">
    <property type="term" value="F:serine-type endopeptidase inhibitor activity"/>
    <property type="evidence" value="ECO:0000318"/>
    <property type="project" value="GO_Central"/>
</dbReference>
<dbReference type="GO" id="GO:0019731">
    <property type="term" value="P:antibacterial humoral response"/>
    <property type="evidence" value="ECO:0000318"/>
    <property type="project" value="GO_Central"/>
</dbReference>
<dbReference type="GO" id="GO:0045087">
    <property type="term" value="P:innate immune response"/>
    <property type="evidence" value="ECO:0000318"/>
    <property type="project" value="GO_Central"/>
</dbReference>
<dbReference type="InterPro" id="IPR008197">
    <property type="entry name" value="WAP_dom"/>
</dbReference>
<dbReference type="PROSITE" id="PS51390">
    <property type="entry name" value="WAP"/>
    <property type="match status" value="1"/>
</dbReference>
<sequence>MAPQTLLLVLVLCVLLLQAQGGYRDKMRMQRIKVCEKRPSIDLCIHHCSYFQKCETNKICCSAFCGNICMSIL</sequence>
<keyword id="KW-0025">Alternative splicing</keyword>
<keyword id="KW-1185">Reference proteome</keyword>
<keyword id="KW-0964">Secreted</keyword>
<keyword id="KW-0732">Signal</keyword>
<comment type="interaction">
    <interactant intactId="EBI-10261124">
        <id>Q8IUB3</id>
    </interactant>
    <interactant intactId="EBI-947187">
        <id>Q9UHD9</id>
        <label>UBQLN2</label>
    </interactant>
    <organismsDiffer>false</organismsDiffer>
    <experiments>3</experiments>
</comment>
<comment type="subcellular location">
    <subcellularLocation>
        <location evidence="5">Secreted</location>
    </subcellularLocation>
</comment>
<comment type="alternative products">
    <event type="alternative splicing"/>
    <isoform>
        <id>Q8IUB3-1</id>
        <name>1</name>
        <name>WAP12a</name>
        <sequence type="displayed"/>
    </isoform>
    <isoform>
        <id>Q8IUB3-2</id>
        <name>2</name>
        <name>WAP12b</name>
        <sequence type="described" ref="VSP_007552"/>
    </isoform>
</comment>
<comment type="tissue specificity">
    <text>Ubiquitously expressed.</text>
</comment>